<feature type="chain" id="PRO_0000084758" description="Mitochondrial sorting homolog">
    <location>
        <begin position="1"/>
        <end position="342"/>
    </location>
</feature>
<feature type="topological domain" description="Mitochondrial intermembrane" evidence="2">
    <location>
        <begin position="1"/>
        <end position="6"/>
    </location>
</feature>
<feature type="transmembrane region" description="Helical" evidence="2">
    <location>
        <begin position="7"/>
        <end position="25"/>
    </location>
</feature>
<feature type="topological domain" description="Cytoplasmic" evidence="2">
    <location>
        <begin position="26"/>
        <end position="342"/>
    </location>
</feature>
<feature type="binding site" evidence="2">
    <location>
        <begin position="124"/>
        <end position="131"/>
    </location>
    <ligand>
        <name>ATP</name>
        <dbReference type="ChEBI" id="CHEBI:30616"/>
    </ligand>
</feature>
<feature type="splice variant" id="VSP_000023" description="In isoform b." evidence="3">
    <location>
        <begin position="46"/>
        <end position="48"/>
    </location>
</feature>
<accession>P54815</accession>
<accession>Q95ZR8</accession>
<organism>
    <name type="scientific">Caenorhabditis elegans</name>
    <dbReference type="NCBI Taxonomy" id="6239"/>
    <lineage>
        <taxon>Eukaryota</taxon>
        <taxon>Metazoa</taxon>
        <taxon>Ecdysozoa</taxon>
        <taxon>Nematoda</taxon>
        <taxon>Chromadorea</taxon>
        <taxon>Rhabditida</taxon>
        <taxon>Rhabditina</taxon>
        <taxon>Rhabditomorpha</taxon>
        <taxon>Rhabditoidea</taxon>
        <taxon>Rhabditidae</taxon>
        <taxon>Peloderinae</taxon>
        <taxon>Caenorhabditis</taxon>
    </lineage>
</organism>
<comment type="function">
    <text evidence="1">Involved in intramitochondrial sorting of proteins.</text>
</comment>
<comment type="subcellular location">
    <subcellularLocation>
        <location evidence="1">Mitochondrion outer membrane</location>
        <topology evidence="1">Single-pass membrane protein</topology>
    </subcellularLocation>
</comment>
<comment type="alternative products">
    <event type="alternative splicing"/>
    <isoform>
        <id>P54815-1</id>
        <name>a</name>
        <sequence type="displayed"/>
    </isoform>
    <isoform>
        <id>P54815-2</id>
        <name>b</name>
        <sequence type="described" ref="VSP_000023"/>
    </isoform>
</comment>
<comment type="similarity">
    <text evidence="3">Belongs to the AAA ATPase family.</text>
</comment>
<evidence type="ECO:0000250" key="1"/>
<evidence type="ECO:0000255" key="2"/>
<evidence type="ECO:0000305" key="3"/>
<gene>
    <name type="primary">mspn-1</name>
    <name type="ORF">K04D7.2</name>
</gene>
<keyword id="KW-0025">Alternative splicing</keyword>
<keyword id="KW-0067">ATP-binding</keyword>
<keyword id="KW-0472">Membrane</keyword>
<keyword id="KW-0496">Mitochondrion</keyword>
<keyword id="KW-1000">Mitochondrion outer membrane</keyword>
<keyword id="KW-0547">Nucleotide-binding</keyword>
<keyword id="KW-1185">Reference proteome</keyword>
<keyword id="KW-0812">Transmembrane</keyword>
<keyword id="KW-1133">Transmembrane helix</keyword>
<dbReference type="EMBL" id="Z69664">
    <property type="protein sequence ID" value="CAA93516.2"/>
    <property type="molecule type" value="Genomic_DNA"/>
</dbReference>
<dbReference type="EMBL" id="Z69664">
    <property type="protein sequence ID" value="CAC42312.1"/>
    <property type="molecule type" value="Genomic_DNA"/>
</dbReference>
<dbReference type="PIR" id="T23311">
    <property type="entry name" value="T23311"/>
</dbReference>
<dbReference type="RefSeq" id="NP_501860.1">
    <molecule id="P54815-1"/>
    <property type="nucleotide sequence ID" value="NM_069459.9"/>
</dbReference>
<dbReference type="RefSeq" id="NP_501861.1">
    <molecule id="P54815-2"/>
    <property type="nucleotide sequence ID" value="NM_069460.3"/>
</dbReference>
<dbReference type="SMR" id="P54815"/>
<dbReference type="BioGRID" id="42998">
    <property type="interactions" value="3"/>
</dbReference>
<dbReference type="FunCoup" id="P54815">
    <property type="interactions" value="2525"/>
</dbReference>
<dbReference type="IntAct" id="P54815">
    <property type="interactions" value="1"/>
</dbReference>
<dbReference type="STRING" id="6239.K04D7.2a.1"/>
<dbReference type="PaxDb" id="6239-K04D7.2a"/>
<dbReference type="PeptideAtlas" id="P54815"/>
<dbReference type="EnsemblMetazoa" id="K04D7.2a.1">
    <molecule id="P54815-1"/>
    <property type="protein sequence ID" value="K04D7.2a.1"/>
    <property type="gene ID" value="WBGene00010557"/>
</dbReference>
<dbReference type="EnsemblMetazoa" id="K04D7.2b.1">
    <molecule id="P54815-2"/>
    <property type="protein sequence ID" value="K04D7.2b.1"/>
    <property type="gene ID" value="WBGene00010557"/>
</dbReference>
<dbReference type="GeneID" id="177896"/>
<dbReference type="KEGG" id="cel:CELE_K04D7.2"/>
<dbReference type="UCSC" id="K04D7.2a">
    <molecule id="P54815-1"/>
    <property type="organism name" value="c. elegans"/>
</dbReference>
<dbReference type="AGR" id="WB:WBGene00010557"/>
<dbReference type="CTD" id="177896"/>
<dbReference type="WormBase" id="K04D7.2a">
    <molecule id="P54815-1"/>
    <property type="protein sequence ID" value="CE28240"/>
    <property type="gene ID" value="WBGene00010557"/>
    <property type="gene designation" value="mspn-1"/>
</dbReference>
<dbReference type="WormBase" id="K04D7.2b">
    <molecule id="P54815-2"/>
    <property type="protein sequence ID" value="CE28241"/>
    <property type="gene ID" value="WBGene00010557"/>
    <property type="gene designation" value="mspn-1"/>
</dbReference>
<dbReference type="eggNOG" id="KOG0737">
    <property type="taxonomic scope" value="Eukaryota"/>
</dbReference>
<dbReference type="GeneTree" id="ENSGT00940000166329"/>
<dbReference type="InParanoid" id="P54815"/>
<dbReference type="OMA" id="KYMRAAH"/>
<dbReference type="OrthoDB" id="10254455at2759"/>
<dbReference type="PhylomeDB" id="P54815"/>
<dbReference type="Reactome" id="R-CEL-9603798">
    <property type="pathway name" value="Class I peroxisomal membrane protein import"/>
</dbReference>
<dbReference type="SignaLink" id="P54815"/>
<dbReference type="PRO" id="PR:P54815"/>
<dbReference type="Proteomes" id="UP000001940">
    <property type="component" value="Chromosome IV"/>
</dbReference>
<dbReference type="Bgee" id="WBGene00010557">
    <property type="expression patterns" value="Expressed in germ line (C elegans) and 4 other cell types or tissues"/>
</dbReference>
<dbReference type="GO" id="GO:0005741">
    <property type="term" value="C:mitochondrial outer membrane"/>
    <property type="evidence" value="ECO:0000318"/>
    <property type="project" value="GO_Central"/>
</dbReference>
<dbReference type="GO" id="GO:0005524">
    <property type="term" value="F:ATP binding"/>
    <property type="evidence" value="ECO:0007669"/>
    <property type="project" value="UniProtKB-KW"/>
</dbReference>
<dbReference type="GO" id="GO:0016887">
    <property type="term" value="F:ATP hydrolysis activity"/>
    <property type="evidence" value="ECO:0007669"/>
    <property type="project" value="InterPro"/>
</dbReference>
<dbReference type="GO" id="GO:0140570">
    <property type="term" value="P:extraction of mislocalized protein from mitochondrial outer membrane"/>
    <property type="evidence" value="ECO:0000318"/>
    <property type="project" value="GO_Central"/>
</dbReference>
<dbReference type="CDD" id="cd19520">
    <property type="entry name" value="RecA-like_ATAD1"/>
    <property type="match status" value="1"/>
</dbReference>
<dbReference type="FunFam" id="3.40.50.300:FF:000538">
    <property type="entry name" value="ATPase family AAA domain-containing protein 1"/>
    <property type="match status" value="1"/>
</dbReference>
<dbReference type="Gene3D" id="1.10.8.60">
    <property type="match status" value="1"/>
</dbReference>
<dbReference type="Gene3D" id="3.40.50.300">
    <property type="entry name" value="P-loop containing nucleotide triphosphate hydrolases"/>
    <property type="match status" value="1"/>
</dbReference>
<dbReference type="InterPro" id="IPR003593">
    <property type="entry name" value="AAA+_ATPase"/>
</dbReference>
<dbReference type="InterPro" id="IPR041569">
    <property type="entry name" value="AAA_lid_3"/>
</dbReference>
<dbReference type="InterPro" id="IPR003959">
    <property type="entry name" value="ATPase_AAA_core"/>
</dbReference>
<dbReference type="InterPro" id="IPR003960">
    <property type="entry name" value="ATPase_AAA_CS"/>
</dbReference>
<dbReference type="InterPro" id="IPR051701">
    <property type="entry name" value="Mito_OM_Translocase_MSP1"/>
</dbReference>
<dbReference type="InterPro" id="IPR027417">
    <property type="entry name" value="P-loop_NTPase"/>
</dbReference>
<dbReference type="PANTHER" id="PTHR45644">
    <property type="entry name" value="AAA ATPASE, PUTATIVE (AFU_ORTHOLOGUE AFUA_2G12920)-RELATED-RELATED"/>
    <property type="match status" value="1"/>
</dbReference>
<dbReference type="PANTHER" id="PTHR45644:SF3">
    <property type="entry name" value="FI08533P-RELATED"/>
    <property type="match status" value="1"/>
</dbReference>
<dbReference type="Pfam" id="PF00004">
    <property type="entry name" value="AAA"/>
    <property type="match status" value="1"/>
</dbReference>
<dbReference type="Pfam" id="PF17862">
    <property type="entry name" value="AAA_lid_3"/>
    <property type="match status" value="1"/>
</dbReference>
<dbReference type="SMART" id="SM00382">
    <property type="entry name" value="AAA"/>
    <property type="match status" value="1"/>
</dbReference>
<dbReference type="SUPFAM" id="SSF52540">
    <property type="entry name" value="P-loop containing nucleoside triphosphate hydrolases"/>
    <property type="match status" value="1"/>
</dbReference>
<dbReference type="PROSITE" id="PS00674">
    <property type="entry name" value="AAA"/>
    <property type="match status" value="1"/>
</dbReference>
<sequence>MTDRNELIGVAIRVVAAAAVSFLSVRYLVKYLDPNYSVNEESKKKVAQLFHELGIDRQIELSEHEIRIATQFVGGEDVGADWDEIGGCEELVAELKDRIILPLRFASQSGSHLLSPPRGILLYGPPGCGKTLLAKAVARAAGCRFINLQVSNLTDKWYGESQKLAAAVFSVAQKFQPTIIFIDEIDSFLRDRQSHDHESTAMMKAQFMTLWDGFSSSGDQIIVMGATNRPRDVDAAILRRMTARFQVPVPNAKQRSQILNVILRNEKINNTVNLGEIAQAAEGLSGSDLKEVCRLALLARAKATVASGGSVNQLLPLEQSDFESAVHKYMRAAHLLVEETLD</sequence>
<proteinExistence type="inferred from homology"/>
<protein>
    <recommendedName>
        <fullName>Mitochondrial sorting homolog</fullName>
    </recommendedName>
</protein>
<name>MSP1_CAEEL</name>
<reference key="1">
    <citation type="journal article" date="1998" name="Science">
        <title>Genome sequence of the nematode C. elegans: a platform for investigating biology.</title>
        <authorList>
            <consortium name="The C. elegans sequencing consortium"/>
        </authorList>
    </citation>
    <scope>NUCLEOTIDE SEQUENCE [LARGE SCALE GENOMIC DNA]</scope>
    <scope>ALTERNATIVE SPLICING</scope>
    <source>
        <strain>Bristol N2</strain>
    </source>
</reference>